<gene>
    <name type="primary">ilv5</name>
    <name type="ORF">SPBC56F2.12</name>
</gene>
<name>ILV5_SCHPO</name>
<keyword id="KW-0028">Amino-acid biosynthesis</keyword>
<keyword id="KW-0100">Branched-chain amino acid biosynthesis</keyword>
<keyword id="KW-0460">Magnesium</keyword>
<keyword id="KW-0479">Metal-binding</keyword>
<keyword id="KW-0496">Mitochondrion</keyword>
<keyword id="KW-0521">NADP</keyword>
<keyword id="KW-0560">Oxidoreductase</keyword>
<keyword id="KW-0597">Phosphoprotein</keyword>
<keyword id="KW-1185">Reference proteome</keyword>
<keyword id="KW-0809">Transit peptide</keyword>
<reference key="1">
    <citation type="journal article" date="1997" name="DNA Res.">
        <title>Identification of open reading frames in Schizosaccharomyces pombe cDNAs.</title>
        <authorList>
            <person name="Yoshioka S."/>
            <person name="Kato K."/>
            <person name="Nakai K."/>
            <person name="Okayama H."/>
            <person name="Nojima H."/>
        </authorList>
    </citation>
    <scope>NUCLEOTIDE SEQUENCE [LARGE SCALE MRNA]</scope>
    <source>
        <strain>PR745</strain>
    </source>
</reference>
<reference key="2">
    <citation type="journal article" date="2002" name="Nature">
        <title>The genome sequence of Schizosaccharomyces pombe.</title>
        <authorList>
            <person name="Wood V."/>
            <person name="Gwilliam R."/>
            <person name="Rajandream M.A."/>
            <person name="Lyne M.H."/>
            <person name="Lyne R."/>
            <person name="Stewart A."/>
            <person name="Sgouros J.G."/>
            <person name="Peat N."/>
            <person name="Hayles J."/>
            <person name="Baker S.G."/>
            <person name="Basham D."/>
            <person name="Bowman S."/>
            <person name="Brooks K."/>
            <person name="Brown D."/>
            <person name="Brown S."/>
            <person name="Chillingworth T."/>
            <person name="Churcher C.M."/>
            <person name="Collins M."/>
            <person name="Connor R."/>
            <person name="Cronin A."/>
            <person name="Davis P."/>
            <person name="Feltwell T."/>
            <person name="Fraser A."/>
            <person name="Gentles S."/>
            <person name="Goble A."/>
            <person name="Hamlin N."/>
            <person name="Harris D.E."/>
            <person name="Hidalgo J."/>
            <person name="Hodgson G."/>
            <person name="Holroyd S."/>
            <person name="Hornsby T."/>
            <person name="Howarth S."/>
            <person name="Huckle E.J."/>
            <person name="Hunt S."/>
            <person name="Jagels K."/>
            <person name="James K.D."/>
            <person name="Jones L."/>
            <person name="Jones M."/>
            <person name="Leather S."/>
            <person name="McDonald S."/>
            <person name="McLean J."/>
            <person name="Mooney P."/>
            <person name="Moule S."/>
            <person name="Mungall K.L."/>
            <person name="Murphy L.D."/>
            <person name="Niblett D."/>
            <person name="Odell C."/>
            <person name="Oliver K."/>
            <person name="O'Neil S."/>
            <person name="Pearson D."/>
            <person name="Quail M.A."/>
            <person name="Rabbinowitsch E."/>
            <person name="Rutherford K.M."/>
            <person name="Rutter S."/>
            <person name="Saunders D."/>
            <person name="Seeger K."/>
            <person name="Sharp S."/>
            <person name="Skelton J."/>
            <person name="Simmonds M.N."/>
            <person name="Squares R."/>
            <person name="Squares S."/>
            <person name="Stevens K."/>
            <person name="Taylor K."/>
            <person name="Taylor R.G."/>
            <person name="Tivey A."/>
            <person name="Walsh S.V."/>
            <person name="Warren T."/>
            <person name="Whitehead S."/>
            <person name="Woodward J.R."/>
            <person name="Volckaert G."/>
            <person name="Aert R."/>
            <person name="Robben J."/>
            <person name="Grymonprez B."/>
            <person name="Weltjens I."/>
            <person name="Vanstreels E."/>
            <person name="Rieger M."/>
            <person name="Schaefer M."/>
            <person name="Mueller-Auer S."/>
            <person name="Gabel C."/>
            <person name="Fuchs M."/>
            <person name="Duesterhoeft A."/>
            <person name="Fritzc C."/>
            <person name="Holzer E."/>
            <person name="Moestl D."/>
            <person name="Hilbert H."/>
            <person name="Borzym K."/>
            <person name="Langer I."/>
            <person name="Beck A."/>
            <person name="Lehrach H."/>
            <person name="Reinhardt R."/>
            <person name="Pohl T.M."/>
            <person name="Eger P."/>
            <person name="Zimmermann W."/>
            <person name="Wedler H."/>
            <person name="Wambutt R."/>
            <person name="Purnelle B."/>
            <person name="Goffeau A."/>
            <person name="Cadieu E."/>
            <person name="Dreano S."/>
            <person name="Gloux S."/>
            <person name="Lelaure V."/>
            <person name="Mottier S."/>
            <person name="Galibert F."/>
            <person name="Aves S.J."/>
            <person name="Xiang Z."/>
            <person name="Hunt C."/>
            <person name="Moore K."/>
            <person name="Hurst S.M."/>
            <person name="Lucas M."/>
            <person name="Rochet M."/>
            <person name="Gaillardin C."/>
            <person name="Tallada V.A."/>
            <person name="Garzon A."/>
            <person name="Thode G."/>
            <person name="Daga R.R."/>
            <person name="Cruzado L."/>
            <person name="Jimenez J."/>
            <person name="Sanchez M."/>
            <person name="del Rey F."/>
            <person name="Benito J."/>
            <person name="Dominguez A."/>
            <person name="Revuelta J.L."/>
            <person name="Moreno S."/>
            <person name="Armstrong J."/>
            <person name="Forsburg S.L."/>
            <person name="Cerutti L."/>
            <person name="Lowe T."/>
            <person name="McCombie W.R."/>
            <person name="Paulsen I."/>
            <person name="Potashkin J."/>
            <person name="Shpakovski G.V."/>
            <person name="Ussery D."/>
            <person name="Barrell B.G."/>
            <person name="Nurse P."/>
        </authorList>
    </citation>
    <scope>NUCLEOTIDE SEQUENCE [LARGE SCALE GENOMIC DNA]</scope>
    <source>
        <strain>972 / ATCC 24843</strain>
    </source>
</reference>
<reference key="3">
    <citation type="submission" date="1997-12" db="EMBL/GenBank/DDBJ databases">
        <title>S.pombe ILV5 homolog.</title>
        <authorList>
            <person name="Kawamukai M."/>
        </authorList>
    </citation>
    <scope>NUCLEOTIDE SEQUENCE [MRNA] OF 262-404</scope>
</reference>
<reference key="4">
    <citation type="journal article" date="2008" name="J. Proteome Res.">
        <title>Phosphoproteome analysis of fission yeast.</title>
        <authorList>
            <person name="Wilson-Grady J.T."/>
            <person name="Villen J."/>
            <person name="Gygi S.P."/>
        </authorList>
    </citation>
    <scope>PHOSPHORYLATION [LARGE SCALE ANALYSIS] AT SER-261</scope>
    <scope>IDENTIFICATION BY MASS SPECTROMETRY</scope>
</reference>
<sequence length="404" mass="45189">MSFRNSSRMAMKALRTMGSRRLATRSMSVMARTIAAPSMRFAPRMTAPLMQTRGMRVMDFAGTKENVWERSDWPREKLVDYFKNDTLAIIGYGSQGHGQGLNARDQGLNVIVGVRKDGASWKQAIEDGWVPGKTLFPVEEAIKKGSIIMNLLSDAAQTETWPKIAPLITKGKTLYFSHGFSVIFKDQTKIHPPKDVDVILVAPKGSGRTVRTLFKEGRGINSSFAVYQDVTGKAQEKAIGLAVAVGSGFIYQTTFKKEVISDLVGERGCLMGGINGLFLAQYQVLRERGHSPAEAFNETVEEATQSLYPLIGKYGLDYMFAACSTTARRGAIDWTPRFLEANKKVLNELYDNVENGNEAKRSLEYNSAPNYRELYDKELEEIRNLEIWKAGEVVRSLRPEHNKH</sequence>
<dbReference type="EC" id="1.1.1.86"/>
<dbReference type="EMBL" id="D89175">
    <property type="protein sequence ID" value="BAA13837.1"/>
    <property type="molecule type" value="mRNA"/>
</dbReference>
<dbReference type="EMBL" id="CU329671">
    <property type="protein sequence ID" value="CAA18891.1"/>
    <property type="molecule type" value="Genomic_DNA"/>
</dbReference>
<dbReference type="EMBL" id="AB009603">
    <property type="protein sequence ID" value="BAA24000.1"/>
    <property type="molecule type" value="mRNA"/>
</dbReference>
<dbReference type="PIR" id="T40532">
    <property type="entry name" value="T40532"/>
</dbReference>
<dbReference type="RefSeq" id="NP_001018845.2">
    <property type="nucleotide sequence ID" value="NM_001022630.3"/>
</dbReference>
<dbReference type="SMR" id="P78827"/>
<dbReference type="BioGRID" id="280430">
    <property type="interactions" value="6"/>
</dbReference>
<dbReference type="FunCoup" id="P78827">
    <property type="interactions" value="407"/>
</dbReference>
<dbReference type="STRING" id="284812.P78827"/>
<dbReference type="iPTMnet" id="P78827"/>
<dbReference type="PaxDb" id="4896-SPBC56F2.12.1"/>
<dbReference type="EnsemblFungi" id="SPBC56F2.12.1">
    <property type="protein sequence ID" value="SPBC56F2.12.1:pep"/>
    <property type="gene ID" value="SPBC56F2.12"/>
</dbReference>
<dbReference type="GeneID" id="3361354"/>
<dbReference type="KEGG" id="spo:3361354"/>
<dbReference type="PomBase" id="SPBC56F2.12">
    <property type="gene designation" value="ilv5"/>
</dbReference>
<dbReference type="VEuPathDB" id="FungiDB:SPBC56F2.12"/>
<dbReference type="eggNOG" id="ENOG502QQBF">
    <property type="taxonomic scope" value="Eukaryota"/>
</dbReference>
<dbReference type="HOGENOM" id="CLU_033821_1_2_1"/>
<dbReference type="InParanoid" id="P78827"/>
<dbReference type="OMA" id="RAMFSWL"/>
<dbReference type="PhylomeDB" id="P78827"/>
<dbReference type="UniPathway" id="UPA00047">
    <property type="reaction ID" value="UER00056"/>
</dbReference>
<dbReference type="UniPathway" id="UPA00049">
    <property type="reaction ID" value="UER00060"/>
</dbReference>
<dbReference type="PRO" id="PR:P78827"/>
<dbReference type="Proteomes" id="UP000002485">
    <property type="component" value="Chromosome II"/>
</dbReference>
<dbReference type="GO" id="GO:0005759">
    <property type="term" value="C:mitochondrial matrix"/>
    <property type="evidence" value="ECO:0000305"/>
    <property type="project" value="PomBase"/>
</dbReference>
<dbReference type="GO" id="GO:0005739">
    <property type="term" value="C:mitochondrion"/>
    <property type="evidence" value="ECO:0007005"/>
    <property type="project" value="PomBase"/>
</dbReference>
<dbReference type="GO" id="GO:0004455">
    <property type="term" value="F:ketol-acid reductoisomerase activity"/>
    <property type="evidence" value="ECO:0000318"/>
    <property type="project" value="GO_Central"/>
</dbReference>
<dbReference type="GO" id="GO:0046872">
    <property type="term" value="F:metal ion binding"/>
    <property type="evidence" value="ECO:0007669"/>
    <property type="project" value="UniProtKB-KW"/>
</dbReference>
<dbReference type="GO" id="GO:0009097">
    <property type="term" value="P:isoleucine biosynthetic process"/>
    <property type="evidence" value="ECO:0000318"/>
    <property type="project" value="GO_Central"/>
</dbReference>
<dbReference type="GO" id="GO:0006551">
    <property type="term" value="P:L-leucine metabolic process"/>
    <property type="evidence" value="ECO:0000250"/>
    <property type="project" value="PomBase"/>
</dbReference>
<dbReference type="GO" id="GO:0009099">
    <property type="term" value="P:L-valine biosynthetic process"/>
    <property type="evidence" value="ECO:0000318"/>
    <property type="project" value="GO_Central"/>
</dbReference>
<dbReference type="FunFam" id="1.10.1040.10:FF:000003">
    <property type="entry name" value="Ketol-acid reductoisomerase, mitochondrial"/>
    <property type="match status" value="1"/>
</dbReference>
<dbReference type="FunFam" id="3.40.50.720:FF:000167">
    <property type="entry name" value="Ketol-acid reductoisomerase, mitochondrial"/>
    <property type="match status" value="1"/>
</dbReference>
<dbReference type="Gene3D" id="1.10.1040.10">
    <property type="entry name" value="N-(1-d-carboxylethyl)-l-norvaline Dehydrogenase, domain 2"/>
    <property type="match status" value="3"/>
</dbReference>
<dbReference type="Gene3D" id="3.40.50.720">
    <property type="entry name" value="NAD(P)-binding Rossmann-like Domain"/>
    <property type="match status" value="1"/>
</dbReference>
<dbReference type="InterPro" id="IPR008927">
    <property type="entry name" value="6-PGluconate_DH-like_C_sf"/>
</dbReference>
<dbReference type="InterPro" id="IPR013328">
    <property type="entry name" value="6PGD_dom2"/>
</dbReference>
<dbReference type="InterPro" id="IPR013023">
    <property type="entry name" value="KARI"/>
</dbReference>
<dbReference type="InterPro" id="IPR000506">
    <property type="entry name" value="KARI_C"/>
</dbReference>
<dbReference type="InterPro" id="IPR013116">
    <property type="entry name" value="KARI_N"/>
</dbReference>
<dbReference type="InterPro" id="IPR016207">
    <property type="entry name" value="KetolA_reductoisomerase_fun"/>
</dbReference>
<dbReference type="InterPro" id="IPR036291">
    <property type="entry name" value="NAD(P)-bd_dom_sf"/>
</dbReference>
<dbReference type="NCBIfam" id="TIGR00465">
    <property type="entry name" value="ilvC"/>
    <property type="match status" value="1"/>
</dbReference>
<dbReference type="PANTHER" id="PTHR21371">
    <property type="entry name" value="KETOL-ACID REDUCTOISOMERASE, MITOCHONDRIAL"/>
    <property type="match status" value="1"/>
</dbReference>
<dbReference type="PANTHER" id="PTHR21371:SF1">
    <property type="entry name" value="KETOL-ACID REDUCTOISOMERASE, MITOCHONDRIAL"/>
    <property type="match status" value="1"/>
</dbReference>
<dbReference type="Pfam" id="PF01450">
    <property type="entry name" value="KARI_C"/>
    <property type="match status" value="1"/>
</dbReference>
<dbReference type="Pfam" id="PF07991">
    <property type="entry name" value="KARI_N"/>
    <property type="match status" value="1"/>
</dbReference>
<dbReference type="PIRSF" id="PIRSF000119">
    <property type="entry name" value="Ilv5_fungal"/>
    <property type="match status" value="1"/>
</dbReference>
<dbReference type="SUPFAM" id="SSF48179">
    <property type="entry name" value="6-phosphogluconate dehydrogenase C-terminal domain-like"/>
    <property type="match status" value="1"/>
</dbReference>
<dbReference type="SUPFAM" id="SSF51735">
    <property type="entry name" value="NAD(P)-binding Rossmann-fold domains"/>
    <property type="match status" value="1"/>
</dbReference>
<dbReference type="PROSITE" id="PS51851">
    <property type="entry name" value="KARI_C"/>
    <property type="match status" value="1"/>
</dbReference>
<dbReference type="PROSITE" id="PS51850">
    <property type="entry name" value="KARI_N"/>
    <property type="match status" value="1"/>
</dbReference>
<protein>
    <recommendedName>
        <fullName>Probable ketol-acid reductoisomerase, mitochondrial</fullName>
        <ecNumber>1.1.1.86</ecNumber>
    </recommendedName>
    <alternativeName>
        <fullName>Acetohydroxy-acid reductoisomerase</fullName>
    </alternativeName>
    <alternativeName>
        <fullName>Alpha-keto-beta-hydroxylacyl reductoisomerase</fullName>
    </alternativeName>
</protein>
<feature type="transit peptide" description="Mitochondrion" evidence="2">
    <location>
        <begin position="1"/>
        <end status="unknown"/>
    </location>
</feature>
<feature type="chain" id="PRO_0000015633" description="Probable ketol-acid reductoisomerase, mitochondrial">
    <location>
        <begin status="unknown"/>
        <end position="404"/>
    </location>
</feature>
<feature type="domain" description="KARI N-terminal Rossmann" evidence="3">
    <location>
        <begin position="63"/>
        <end position="253"/>
    </location>
</feature>
<feature type="domain" description="KARI C-terminal knotted" evidence="4">
    <location>
        <begin position="254"/>
        <end position="401"/>
    </location>
</feature>
<feature type="active site" evidence="2">
    <location>
        <position position="178"/>
    </location>
</feature>
<feature type="binding site" evidence="2">
    <location>
        <begin position="91"/>
        <end position="100"/>
    </location>
    <ligand>
        <name>NADP(+)</name>
        <dbReference type="ChEBI" id="CHEBI:58349"/>
    </ligand>
</feature>
<feature type="binding site" evidence="1">
    <location>
        <begin position="115"/>
        <end position="120"/>
    </location>
    <ligand>
        <name>NADP(+)</name>
        <dbReference type="ChEBI" id="CHEBI:58349"/>
    </ligand>
</feature>
<feature type="binding site" evidence="1">
    <location>
        <begin position="153"/>
        <end position="157"/>
    </location>
    <ligand>
        <name>NADP(+)</name>
        <dbReference type="ChEBI" id="CHEBI:58349"/>
    </ligand>
</feature>
<feature type="binding site" evidence="4">
    <location>
        <position position="262"/>
    </location>
    <ligand>
        <name>Mg(2+)</name>
        <dbReference type="ChEBI" id="CHEBI:18420"/>
        <label>1</label>
    </ligand>
</feature>
<feature type="binding site" evidence="4">
    <location>
        <position position="262"/>
    </location>
    <ligand>
        <name>Mg(2+)</name>
        <dbReference type="ChEBI" id="CHEBI:18420"/>
        <label>2</label>
    </ligand>
</feature>
<feature type="binding site" evidence="4">
    <location>
        <position position="266"/>
    </location>
    <ligand>
        <name>Mg(2+)</name>
        <dbReference type="ChEBI" id="CHEBI:18420"/>
        <label>1</label>
    </ligand>
</feature>
<feature type="binding site" evidence="4">
    <location>
        <position position="298"/>
    </location>
    <ligand>
        <name>Mg(2+)</name>
        <dbReference type="ChEBI" id="CHEBI:18420"/>
        <label>2</label>
    </ligand>
</feature>
<feature type="binding site" evidence="4">
    <location>
        <position position="302"/>
    </location>
    <ligand>
        <name>Mg(2+)</name>
        <dbReference type="ChEBI" id="CHEBI:18420"/>
        <label>2</label>
    </ligand>
</feature>
<feature type="binding site" evidence="4">
    <location>
        <position position="324"/>
    </location>
    <ligand>
        <name>substrate</name>
    </ligand>
</feature>
<feature type="modified residue" description="Phosphoserine" evidence="5">
    <location>
        <position position="261"/>
    </location>
</feature>
<feature type="sequence conflict" description="In Ref. 1; BAA13837." evidence="6" ref="1">
    <original>S</original>
    <variation>R</variation>
    <location>
        <position position="38"/>
    </location>
</feature>
<feature type="sequence conflict" description="In Ref. 1; BAA13837." evidence="6" ref="1">
    <original>Y</original>
    <variation>S</variation>
    <location>
        <position position="92"/>
    </location>
</feature>
<feature type="sequence conflict" description="In Ref. 1; BAA13837." evidence="6" ref="1">
    <original>N</original>
    <variation>P</variation>
    <location>
        <position position="275"/>
    </location>
</feature>
<feature type="sequence conflict" description="In Ref. 1; BAA13837." evidence="6" ref="1">
    <original>N</original>
    <variation>P</variation>
    <location>
        <position position="297"/>
    </location>
</feature>
<feature type="sequence conflict" description="In Ref. 1; BAA13837." evidence="6" ref="1">
    <original>V</original>
    <variation>G</variation>
    <location>
        <position position="394"/>
    </location>
</feature>
<organism>
    <name type="scientific">Schizosaccharomyces pombe (strain 972 / ATCC 24843)</name>
    <name type="common">Fission yeast</name>
    <dbReference type="NCBI Taxonomy" id="284812"/>
    <lineage>
        <taxon>Eukaryota</taxon>
        <taxon>Fungi</taxon>
        <taxon>Dikarya</taxon>
        <taxon>Ascomycota</taxon>
        <taxon>Taphrinomycotina</taxon>
        <taxon>Schizosaccharomycetes</taxon>
        <taxon>Schizosaccharomycetales</taxon>
        <taxon>Schizosaccharomycetaceae</taxon>
        <taxon>Schizosaccharomyces</taxon>
    </lineage>
</organism>
<comment type="catalytic activity">
    <reaction>
        <text>(2R)-2,3-dihydroxy-3-methylbutanoate + NADP(+) = (2S)-2-acetolactate + NADPH + H(+)</text>
        <dbReference type="Rhea" id="RHEA:22068"/>
        <dbReference type="ChEBI" id="CHEBI:15378"/>
        <dbReference type="ChEBI" id="CHEBI:49072"/>
        <dbReference type="ChEBI" id="CHEBI:57783"/>
        <dbReference type="ChEBI" id="CHEBI:58349"/>
        <dbReference type="ChEBI" id="CHEBI:58476"/>
        <dbReference type="EC" id="1.1.1.86"/>
    </reaction>
</comment>
<comment type="catalytic activity">
    <reaction>
        <text>(2R,3R)-2,3-dihydroxy-3-methylpentanoate + NADP(+) = (S)-2-ethyl-2-hydroxy-3-oxobutanoate + NADPH + H(+)</text>
        <dbReference type="Rhea" id="RHEA:13493"/>
        <dbReference type="ChEBI" id="CHEBI:15378"/>
        <dbReference type="ChEBI" id="CHEBI:49256"/>
        <dbReference type="ChEBI" id="CHEBI:49258"/>
        <dbReference type="ChEBI" id="CHEBI:57783"/>
        <dbReference type="ChEBI" id="CHEBI:58349"/>
        <dbReference type="EC" id="1.1.1.86"/>
    </reaction>
</comment>
<comment type="cofactor">
    <cofactor evidence="1">
        <name>Mg(2+)</name>
        <dbReference type="ChEBI" id="CHEBI:18420"/>
    </cofactor>
    <text evidence="1">Binds 2 magnesium ions per subunit.</text>
</comment>
<comment type="pathway">
    <text>Amino-acid biosynthesis; L-isoleucine biosynthesis; L-isoleucine from 2-oxobutanoate: step 2/4.</text>
</comment>
<comment type="pathway">
    <text>Amino-acid biosynthesis; L-valine biosynthesis; L-valine from pyruvate: step 2/4.</text>
</comment>
<comment type="subcellular location">
    <subcellularLocation>
        <location evidence="1">Mitochondrion</location>
    </subcellularLocation>
</comment>
<comment type="similarity">
    <text evidence="6">Belongs to the ketol-acid reductoisomerase family.</text>
</comment>
<proteinExistence type="evidence at protein level"/>
<evidence type="ECO:0000250" key="1"/>
<evidence type="ECO:0000255" key="2"/>
<evidence type="ECO:0000255" key="3">
    <source>
        <dbReference type="PROSITE-ProRule" id="PRU01197"/>
    </source>
</evidence>
<evidence type="ECO:0000255" key="4">
    <source>
        <dbReference type="PROSITE-ProRule" id="PRU01198"/>
    </source>
</evidence>
<evidence type="ECO:0000269" key="5">
    <source>
    </source>
</evidence>
<evidence type="ECO:0000305" key="6"/>
<accession>P78827</accession>
<accession>O42619</accession>